<accession>A1VZI4</accession>
<keyword id="KW-0119">Carbohydrate metabolism</keyword>
<keyword id="KW-0963">Cytoplasm</keyword>
<keyword id="KW-0378">Hydrolase</keyword>
<keyword id="KW-0460">Magnesium</keyword>
<keyword id="KW-0479">Metal-binding</keyword>
<sequence>MQEVISYIQKAVLEISNALKFPDTGYSQNQNFTGDTQLKFDVLSDEIITKTLSQCSSIKAIISEEKDEILTLNEKANFIVAYDPLDGSSLMDVNFAIGSIFAIYEEKASAKNLRAALYSMYGARLELVICKDQPKLYRLNANNEFIFIKDLKMNEKGKINATGGTQKFWEEKHAKFIKSLFDEGYRLRYSGAMVSDINQILLKGGGIFSYPATQDAPNGKLRAFFEVFPLAFIIEKAGGKTTNGKNHSLLELEFDKIHATTPCFFGSEYEISKLLKAYNE</sequence>
<protein>
    <recommendedName>
        <fullName evidence="1">Fructose-1,6-bisphosphatase class 1</fullName>
        <shortName evidence="1">FBPase class 1</shortName>
        <ecNumber evidence="1">3.1.3.11</ecNumber>
    </recommendedName>
    <alternativeName>
        <fullName evidence="1">D-fructose-1,6-bisphosphate 1-phosphohydrolase class 1</fullName>
    </alternativeName>
</protein>
<gene>
    <name evidence="1" type="primary">fbp</name>
    <name type="ordered locus">CJJ81176_0857</name>
</gene>
<reference key="1">
    <citation type="submission" date="2006-12" db="EMBL/GenBank/DDBJ databases">
        <authorList>
            <person name="Fouts D.E."/>
            <person name="Nelson K.E."/>
            <person name="Sebastian Y."/>
        </authorList>
    </citation>
    <scope>NUCLEOTIDE SEQUENCE [LARGE SCALE GENOMIC DNA]</scope>
    <source>
        <strain>81-176</strain>
    </source>
</reference>
<comment type="catalytic activity">
    <reaction evidence="1">
        <text>beta-D-fructose 1,6-bisphosphate + H2O = beta-D-fructose 6-phosphate + phosphate</text>
        <dbReference type="Rhea" id="RHEA:11064"/>
        <dbReference type="ChEBI" id="CHEBI:15377"/>
        <dbReference type="ChEBI" id="CHEBI:32966"/>
        <dbReference type="ChEBI" id="CHEBI:43474"/>
        <dbReference type="ChEBI" id="CHEBI:57634"/>
        <dbReference type="EC" id="3.1.3.11"/>
    </reaction>
</comment>
<comment type="cofactor">
    <cofactor evidence="1">
        <name>Mg(2+)</name>
        <dbReference type="ChEBI" id="CHEBI:18420"/>
    </cofactor>
    <text evidence="1">Binds 2 magnesium ions per subunit.</text>
</comment>
<comment type="pathway">
    <text evidence="1">Carbohydrate biosynthesis; gluconeogenesis.</text>
</comment>
<comment type="subunit">
    <text evidence="1">Homotetramer.</text>
</comment>
<comment type="subcellular location">
    <subcellularLocation>
        <location evidence="1">Cytoplasm</location>
    </subcellularLocation>
</comment>
<comment type="similarity">
    <text evidence="1">Belongs to the FBPase class 1 family.</text>
</comment>
<proteinExistence type="inferred from homology"/>
<evidence type="ECO:0000255" key="1">
    <source>
        <dbReference type="HAMAP-Rule" id="MF_01855"/>
    </source>
</evidence>
<organism>
    <name type="scientific">Campylobacter jejuni subsp. jejuni serotype O:23/36 (strain 81-176)</name>
    <dbReference type="NCBI Taxonomy" id="354242"/>
    <lineage>
        <taxon>Bacteria</taxon>
        <taxon>Pseudomonadati</taxon>
        <taxon>Campylobacterota</taxon>
        <taxon>Epsilonproteobacteria</taxon>
        <taxon>Campylobacterales</taxon>
        <taxon>Campylobacteraceae</taxon>
        <taxon>Campylobacter</taxon>
    </lineage>
</organism>
<dbReference type="EC" id="3.1.3.11" evidence="1"/>
<dbReference type="EMBL" id="CP000538">
    <property type="protein sequence ID" value="EAQ72346.1"/>
    <property type="molecule type" value="Genomic_DNA"/>
</dbReference>
<dbReference type="RefSeq" id="WP_002856914.1">
    <property type="nucleotide sequence ID" value="NC_008787.1"/>
</dbReference>
<dbReference type="SMR" id="A1VZI4"/>
<dbReference type="KEGG" id="cjj:CJJ81176_0857"/>
<dbReference type="eggNOG" id="COG0158">
    <property type="taxonomic scope" value="Bacteria"/>
</dbReference>
<dbReference type="HOGENOM" id="CLU_039977_0_0_7"/>
<dbReference type="UniPathway" id="UPA00138"/>
<dbReference type="Proteomes" id="UP000000646">
    <property type="component" value="Chromosome"/>
</dbReference>
<dbReference type="GO" id="GO:0005829">
    <property type="term" value="C:cytosol"/>
    <property type="evidence" value="ECO:0007669"/>
    <property type="project" value="TreeGrafter"/>
</dbReference>
<dbReference type="GO" id="GO:0042132">
    <property type="term" value="F:fructose 1,6-bisphosphate 1-phosphatase activity"/>
    <property type="evidence" value="ECO:0007669"/>
    <property type="project" value="UniProtKB-UniRule"/>
</dbReference>
<dbReference type="GO" id="GO:0000287">
    <property type="term" value="F:magnesium ion binding"/>
    <property type="evidence" value="ECO:0007669"/>
    <property type="project" value="UniProtKB-UniRule"/>
</dbReference>
<dbReference type="GO" id="GO:0030388">
    <property type="term" value="P:fructose 1,6-bisphosphate metabolic process"/>
    <property type="evidence" value="ECO:0007669"/>
    <property type="project" value="TreeGrafter"/>
</dbReference>
<dbReference type="GO" id="GO:0006002">
    <property type="term" value="P:fructose 6-phosphate metabolic process"/>
    <property type="evidence" value="ECO:0007669"/>
    <property type="project" value="TreeGrafter"/>
</dbReference>
<dbReference type="GO" id="GO:0006000">
    <property type="term" value="P:fructose metabolic process"/>
    <property type="evidence" value="ECO:0007669"/>
    <property type="project" value="TreeGrafter"/>
</dbReference>
<dbReference type="GO" id="GO:0006094">
    <property type="term" value="P:gluconeogenesis"/>
    <property type="evidence" value="ECO:0007669"/>
    <property type="project" value="UniProtKB-UniRule"/>
</dbReference>
<dbReference type="GO" id="GO:0005986">
    <property type="term" value="P:sucrose biosynthetic process"/>
    <property type="evidence" value="ECO:0007669"/>
    <property type="project" value="TreeGrafter"/>
</dbReference>
<dbReference type="Gene3D" id="3.40.190.80">
    <property type="match status" value="1"/>
</dbReference>
<dbReference type="Gene3D" id="3.30.540.10">
    <property type="entry name" value="Fructose-1,6-Bisphosphatase, subunit A, domain 1"/>
    <property type="match status" value="1"/>
</dbReference>
<dbReference type="HAMAP" id="MF_01855">
    <property type="entry name" value="FBPase_class1"/>
    <property type="match status" value="1"/>
</dbReference>
<dbReference type="InterPro" id="IPR044015">
    <property type="entry name" value="FBPase_C_dom"/>
</dbReference>
<dbReference type="InterPro" id="IPR000146">
    <property type="entry name" value="FBPase_class-1"/>
</dbReference>
<dbReference type="InterPro" id="IPR033391">
    <property type="entry name" value="FBPase_N"/>
</dbReference>
<dbReference type="InterPro" id="IPR028343">
    <property type="entry name" value="FBPtase"/>
</dbReference>
<dbReference type="InterPro" id="IPR023079">
    <property type="entry name" value="SBPase"/>
</dbReference>
<dbReference type="NCBIfam" id="NF006782">
    <property type="entry name" value="PRK09293.2-3"/>
    <property type="match status" value="1"/>
</dbReference>
<dbReference type="PANTHER" id="PTHR11556">
    <property type="entry name" value="FRUCTOSE-1,6-BISPHOSPHATASE-RELATED"/>
    <property type="match status" value="1"/>
</dbReference>
<dbReference type="PANTHER" id="PTHR11556:SF35">
    <property type="entry name" value="SEDOHEPTULOSE-1,7-BISPHOSPHATASE, CHLOROPLASTIC"/>
    <property type="match status" value="1"/>
</dbReference>
<dbReference type="Pfam" id="PF00316">
    <property type="entry name" value="FBPase"/>
    <property type="match status" value="1"/>
</dbReference>
<dbReference type="Pfam" id="PF18913">
    <property type="entry name" value="FBPase_C"/>
    <property type="match status" value="1"/>
</dbReference>
<dbReference type="PIRSF" id="PIRSF500210">
    <property type="entry name" value="FBPtase"/>
    <property type="match status" value="1"/>
</dbReference>
<dbReference type="PIRSF" id="PIRSF000904">
    <property type="entry name" value="FBPtase_SBPase"/>
    <property type="match status" value="1"/>
</dbReference>
<dbReference type="PRINTS" id="PR01958">
    <property type="entry name" value="S17BPHPHTASE"/>
</dbReference>
<dbReference type="SUPFAM" id="SSF56655">
    <property type="entry name" value="Carbohydrate phosphatase"/>
    <property type="match status" value="1"/>
</dbReference>
<name>F16PA_CAMJJ</name>
<feature type="chain" id="PRO_0000364515" description="Fructose-1,6-bisphosphatase class 1">
    <location>
        <begin position="1"/>
        <end position="280"/>
    </location>
</feature>
<feature type="binding site" evidence="1">
    <location>
        <position position="64"/>
    </location>
    <ligand>
        <name>Mg(2+)</name>
        <dbReference type="ChEBI" id="CHEBI:18420"/>
        <label>1</label>
    </ligand>
</feature>
<feature type="binding site" evidence="1">
    <location>
        <position position="83"/>
    </location>
    <ligand>
        <name>Mg(2+)</name>
        <dbReference type="ChEBI" id="CHEBI:18420"/>
        <label>1</label>
    </ligand>
</feature>
<feature type="binding site" evidence="1">
    <location>
        <position position="83"/>
    </location>
    <ligand>
        <name>Mg(2+)</name>
        <dbReference type="ChEBI" id="CHEBI:18420"/>
        <label>2</label>
    </ligand>
</feature>
<feature type="binding site" evidence="1">
    <location>
        <position position="85"/>
    </location>
    <ligand>
        <name>Mg(2+)</name>
        <dbReference type="ChEBI" id="CHEBI:18420"/>
        <label>1</label>
    </ligand>
</feature>
<feature type="binding site" evidence="1">
    <location>
        <begin position="86"/>
        <end position="89"/>
    </location>
    <ligand>
        <name>substrate</name>
    </ligand>
</feature>
<feature type="binding site" evidence="1">
    <location>
        <position position="86"/>
    </location>
    <ligand>
        <name>Mg(2+)</name>
        <dbReference type="ChEBI" id="CHEBI:18420"/>
        <label>2</label>
    </ligand>
</feature>
<feature type="binding site" evidence="1">
    <location>
        <position position="189"/>
    </location>
    <ligand>
        <name>substrate</name>
    </ligand>
</feature>
<feature type="binding site" evidence="1">
    <location>
        <position position="220"/>
    </location>
    <ligand>
        <name>substrate</name>
    </ligand>
</feature>
<feature type="binding site" evidence="1">
    <location>
        <position position="226"/>
    </location>
    <ligand>
        <name>Mg(2+)</name>
        <dbReference type="ChEBI" id="CHEBI:18420"/>
        <label>2</label>
    </ligand>
</feature>